<name>SRAP_STAAN</name>
<reference key="1">
    <citation type="journal article" date="2001" name="Lancet">
        <title>Whole genome sequencing of meticillin-resistant Staphylococcus aureus.</title>
        <authorList>
            <person name="Kuroda M."/>
            <person name="Ohta T."/>
            <person name="Uchiyama I."/>
            <person name="Baba T."/>
            <person name="Yuzawa H."/>
            <person name="Kobayashi I."/>
            <person name="Cui L."/>
            <person name="Oguchi A."/>
            <person name="Aoki K."/>
            <person name="Nagai Y."/>
            <person name="Lian J.-Q."/>
            <person name="Ito T."/>
            <person name="Kanamori M."/>
            <person name="Matsumaru H."/>
            <person name="Maruyama A."/>
            <person name="Murakami H."/>
            <person name="Hosoyama A."/>
            <person name="Mizutani-Ui Y."/>
            <person name="Takahashi N.K."/>
            <person name="Sawano T."/>
            <person name="Inoue R."/>
            <person name="Kaito C."/>
            <person name="Sekimizu K."/>
            <person name="Hirakawa H."/>
            <person name="Kuhara S."/>
            <person name="Goto S."/>
            <person name="Yabuzaki J."/>
            <person name="Kanehisa M."/>
            <person name="Yamashita A."/>
            <person name="Oshima K."/>
            <person name="Furuya K."/>
            <person name="Yoshino C."/>
            <person name="Shiba T."/>
            <person name="Hattori M."/>
            <person name="Ogasawara N."/>
            <person name="Hayashi H."/>
            <person name="Hiramatsu K."/>
        </authorList>
    </citation>
    <scope>NUCLEOTIDE SEQUENCE [LARGE SCALE GENOMIC DNA]</scope>
    <source>
        <strain>N315</strain>
    </source>
</reference>
<reference key="2">
    <citation type="submission" date="2007-10" db="UniProtKB">
        <title>Shotgun proteomic analysis of total and membrane protein extracts of S. aureus strain N315.</title>
        <authorList>
            <person name="Vaezzadeh A.R."/>
            <person name="Deshusses J."/>
            <person name="Lescuyer P."/>
            <person name="Hochstrasser D.F."/>
        </authorList>
    </citation>
    <scope>IDENTIFICATION BY MASS SPECTROMETRY [LARGE SCALE ANALYSIS]</scope>
    <source>
        <strain>N315</strain>
    </source>
</reference>
<dbReference type="EMBL" id="BA000018">
    <property type="protein sequence ID" value="BAB43752.1"/>
    <property type="molecule type" value="Genomic_DNA"/>
</dbReference>
<dbReference type="PIR" id="F90073">
    <property type="entry name" value="F90073"/>
</dbReference>
<dbReference type="RefSeq" id="WP_000044547.1">
    <property type="nucleotide sequence ID" value="NC_002745.2"/>
</dbReference>
<dbReference type="SMR" id="Q7A362"/>
<dbReference type="EnsemblBacteria" id="BAB43752">
    <property type="protein sequence ID" value="BAB43752"/>
    <property type="gene ID" value="BAB43752"/>
</dbReference>
<dbReference type="KEGG" id="sau:SA2447"/>
<dbReference type="HOGENOM" id="CLU_002109_0_0_9"/>
<dbReference type="GO" id="GO:0005576">
    <property type="term" value="C:extracellular region"/>
    <property type="evidence" value="ECO:0007669"/>
    <property type="project" value="UniProtKB-KW"/>
</dbReference>
<dbReference type="GO" id="GO:0016020">
    <property type="term" value="C:membrane"/>
    <property type="evidence" value="ECO:0007669"/>
    <property type="project" value="InterPro"/>
</dbReference>
<dbReference type="GO" id="GO:0005509">
    <property type="term" value="F:calcium ion binding"/>
    <property type="evidence" value="ECO:0007669"/>
    <property type="project" value="InterPro"/>
</dbReference>
<dbReference type="GO" id="GO:0007155">
    <property type="term" value="P:cell adhesion"/>
    <property type="evidence" value="ECO:0007669"/>
    <property type="project" value="UniProtKB-KW"/>
</dbReference>
<dbReference type="CDD" id="cd01951">
    <property type="entry name" value="lectin_L-type"/>
    <property type="match status" value="1"/>
</dbReference>
<dbReference type="Gene3D" id="2.60.120.200">
    <property type="match status" value="1"/>
</dbReference>
<dbReference type="Gene3D" id="3.10.20.320">
    <property type="entry name" value="Putative peptidoglycan bound protein (lpxtg motif)"/>
    <property type="match status" value="1"/>
</dbReference>
<dbReference type="InterPro" id="IPR015919">
    <property type="entry name" value="Cadherin-like_sf"/>
</dbReference>
<dbReference type="InterPro" id="IPR013320">
    <property type="entry name" value="ConA-like_dom_sf"/>
</dbReference>
<dbReference type="InterPro" id="IPR022263">
    <property type="entry name" value="KxYKxGKxW"/>
</dbReference>
<dbReference type="InterPro" id="IPR056573">
    <property type="entry name" value="Lectin_L-type_dom"/>
</dbReference>
<dbReference type="InterPro" id="IPR019931">
    <property type="entry name" value="LPXTG_anchor"/>
</dbReference>
<dbReference type="NCBIfam" id="TIGR03715">
    <property type="entry name" value="KxYKxGKxW"/>
    <property type="match status" value="1"/>
</dbReference>
<dbReference type="NCBIfam" id="TIGR01167">
    <property type="entry name" value="LPXTG_anchor"/>
    <property type="match status" value="1"/>
</dbReference>
<dbReference type="PANTHER" id="PTHR22928">
    <property type="entry name" value="TELOMERE-ASSOCIATED PROTEIN RIF1"/>
    <property type="match status" value="1"/>
</dbReference>
<dbReference type="PANTHER" id="PTHR22928:SF3">
    <property type="entry name" value="TELOMERE-ASSOCIATED PROTEIN RIF1"/>
    <property type="match status" value="1"/>
</dbReference>
<dbReference type="Pfam" id="PF00746">
    <property type="entry name" value="Gram_pos_anchor"/>
    <property type="match status" value="1"/>
</dbReference>
<dbReference type="Pfam" id="PF19258">
    <property type="entry name" value="KxYKxGKxW_sig"/>
    <property type="match status" value="1"/>
</dbReference>
<dbReference type="Pfam" id="PF18483">
    <property type="entry name" value="Lectin_L-type_dom"/>
    <property type="match status" value="1"/>
</dbReference>
<dbReference type="SUPFAM" id="SSF49313">
    <property type="entry name" value="Cadherin-like"/>
    <property type="match status" value="2"/>
</dbReference>
<dbReference type="SUPFAM" id="SSF49899">
    <property type="entry name" value="Concanavalin A-like lectins/glucanases"/>
    <property type="match status" value="1"/>
</dbReference>
<dbReference type="PROSITE" id="PS50847">
    <property type="entry name" value="GRAM_POS_ANCHORING"/>
    <property type="match status" value="1"/>
</dbReference>
<accession>Q7A362</accession>
<sequence>MSKRQKAFHDSLANEKTRVRLYKSGKNWVKSGIKEIEMFKIMGLPFISHSLVSQDNQSISKKMTGYGLKTTAVIGGAFTVNMLHDQQAFAASDAPLTSELNTQSETVGNQNSTTIEASTSTADSTSVTKNSSSVQTSNSDTVSSEKSEKVTSTTNSTSNQQEKLTSTSESTSSKNTTSSSDTKSVASTSSTEQPINTSTNQSTASNNTSQSTTPSSVNLNKTSTTSTSTAPVKLRTFSRLAMSTFASAATTTAVTANTITVNKDNLKQYMTTSGNATYDQSTGIVTLTQDAYSQKGAITLGTRIDSNKSFHFSGKVNLGNKYEGHGNGGDGIGFAFSPGVLGETGLNGAAVGIGGLSNAFGFKLDTYHNTSKPNSAAKANADPSNVAGGGAFGAFVTTDSYGVATTYTSSSTADNAAKLNVQPTNNTFQDFDINYNGDTKVMTVKYAGQTWTRNISDWIAKSGTTNFSLSMTASTGGATNLQQVQFGTFEYTESAVTQVRYVDVTTGKDIIPPKTYSGNVDQVVTIDNQQSALTAKGYNYTSVDSSYASTYNDTNKTVKMTNAGQSVTYYFTDVKAPTVTVGNQTIEVGKTMNPVVLTTTDNGTGTVTNTVTGLPSGLSYDSATNSIIGTPTKIGQSTVTVVSTDQANNKSTTTFTINVVDTTAPTVTPIGDQSSEVYSPISPIKIATQDNSGNAVTNTVTGLPSGLTFDSTNNTISGTPTNIGTSTISIVSTDASGNKTTTTFKYEVTRNSMSDSVSTSGSTQQSQSVSTSKADSQSASTSTSGSIVVSTSASTSKSTSVSLSDSVSASKSLSTSESNSVSSSTSTSLVNSQSVSSSMSGSVSKSTSLSDSISNSNSTEKSESLSTSTSDSLRTSTSLSDSLSMSTSGSLSKSQSLSTSISGSSSTSASLSDSTSNAISTSTSLSESASTSDSISISNSIANSQSASTSKSDSQSTSISLSTSDSKSMSTSESLSDSTSTSGSVSGSLSIAASQSVSTSTSDSMSTSEIVSDSISTSGSLSASDSKSMSVSSSMSTSQSGSTSESLSDSQSTSDSDSKSLSLSTSQSGSTSTSTSTSASVRTSESQSTSGSMSASQSDSMSISTSFSDSTSDSKSASTASSESISQSASTSTSGSVSTSTSLSTSNSERTSTSVSDSTSLSTSESDSISESTSTSDSISEAISASESTSISLSESNSTSDSESQSASAFLSESLSESTSESTSESVSSSTSESTSLSDSTSESGSTSTSLSNSTSGSASISTSTSISESTSTFKSESVSTSLSMSTSTSLSNSTSLSTSLSDSTSDSKSDSLSTSMSTSDSISTSKSDSISTSTSLSGSTSESESDSTSSSESKSDSTSMSISMSQSTSGSTSTSTSTSLSDSTSTSLSLSASMNQSGVDSNSASQSASNSTSTSTSESDSQSTSTYTSQSTSQSESTSTSTSLSDSTSISKSTSQSGSTSTSASLSGSESESDSQSISTSASESTSESASTSLSDSTSTSNSGSASTSTSLSNSASASESDSSSTSLSDSTSASMQSSESDSQSTSASLSDSLSTSTSNRMSTIASLSTSVSTSESGSTSESTSESDSTSTSLSDSQSTSRSTSASGSASTSTSTSDSRSTSASTSTSMRTSTSDSQSMSLSTSTSTSMSDSTSLSDSVSDSTSDSTSASTSGSMSVSISLSDSTSTSTSASEVMSASISDSQSMSESVNDSESVSESNSESDSKSMSGSTSVSDSGSLSVSTSLRKSESVSESSSLSGSQSMSDSVSTSDSSSLSVSTSLRSSESVSESDSLSDSKSTSGSTSTSTSGSLSTSTSLSGSESVSESTSLSDSISMSDSTSTSDSDSLSGSISLSGSTSLSTSDSLSDSKSLSSSQSMSGSESTSTSVSDSQSSSTSNSQFDSMSISASESDSMSTSDSSNISGSNSTSTSLSTSDSMSGSVSVSTSTSLSDSISGSTSVSDSSSTSTSTSLSDSMSQSQSTSTSASGSLSTSISTSMSMSASTSSSQSTSVSTSLSTSDSISDSTSISISGSQSTVESESTSDSTSISDSESLSTSDSDSTSTSTSDSTSGSTSTSISESLSTSGSGSTSVSDSTSMSESDSTSVSMSQDKSDSTSISDSESVSTSTSTSLSTSDSTSTSESLSTSMSGSQSISDSTSTSMSGSTSTSESNSMHPSDSMSMHHTHSTSTSRLSSEATTSTSESQSTLSATSEVTKHNGTPAQSEKRLPDTGDSIKQNGLLGGVMTLLVGLGLMKRKKKKDENDQDDSQA</sequence>
<feature type="signal peptide" evidence="3">
    <location>
        <begin position="1"/>
        <end position="89"/>
    </location>
</feature>
<feature type="chain" id="PRO_0000273930" description="Serine-rich adhesin for platelets">
    <location>
        <begin position="90"/>
        <end position="2232"/>
    </location>
</feature>
<feature type="propeptide" id="PRO_0000273931" description="Removed by sortase" evidence="4">
    <location>
        <begin position="2233"/>
        <end position="2271"/>
    </location>
</feature>
<feature type="region of interest" description="Serine-rich repeat region 1, SRR1" evidence="3">
    <location>
        <begin position="90"/>
        <end position="230"/>
    </location>
</feature>
<feature type="region of interest" description="Disordered" evidence="5">
    <location>
        <begin position="100"/>
        <end position="229"/>
    </location>
</feature>
<feature type="region of interest" description="Non-repeat region (NRR)" evidence="3">
    <location>
        <begin position="231"/>
        <end position="751"/>
    </location>
</feature>
<feature type="region of interest" description="Disordered" evidence="5">
    <location>
        <begin position="751"/>
        <end position="791"/>
    </location>
</feature>
<feature type="region of interest" description="Serine-rich repeat region 2, SRR2" evidence="3">
    <location>
        <begin position="752"/>
        <end position="2232"/>
    </location>
</feature>
<feature type="region of interest" description="Disordered" evidence="5">
    <location>
        <begin position="806"/>
        <end position="2243"/>
    </location>
</feature>
<feature type="short sequence motif" description="LPXTG sorting signal" evidence="4">
    <location>
        <begin position="2229"/>
        <end position="2233"/>
    </location>
</feature>
<feature type="compositionally biased region" description="Polar residues" evidence="5">
    <location>
        <begin position="100"/>
        <end position="111"/>
    </location>
</feature>
<feature type="compositionally biased region" description="Low complexity" evidence="5">
    <location>
        <begin position="112"/>
        <end position="128"/>
    </location>
</feature>
<feature type="compositionally biased region" description="Polar residues" evidence="5">
    <location>
        <begin position="129"/>
        <end position="140"/>
    </location>
</feature>
<feature type="compositionally biased region" description="Low complexity" evidence="5">
    <location>
        <begin position="150"/>
        <end position="229"/>
    </location>
</feature>
<feature type="compositionally biased region" description="Low complexity" evidence="5">
    <location>
        <begin position="752"/>
        <end position="791"/>
    </location>
</feature>
<feature type="compositionally biased region" description="Low complexity" evidence="5">
    <location>
        <begin position="806"/>
        <end position="1392"/>
    </location>
</feature>
<feature type="compositionally biased region" description="Low complexity" evidence="5">
    <location>
        <begin position="1402"/>
        <end position="2214"/>
    </location>
</feature>
<feature type="modified residue" description="Pentaglycyl murein peptidoglycan amidated threonine" evidence="4">
    <location>
        <position position="2232"/>
    </location>
</feature>
<organism>
    <name type="scientific">Staphylococcus aureus (strain N315)</name>
    <dbReference type="NCBI Taxonomy" id="158879"/>
    <lineage>
        <taxon>Bacteria</taxon>
        <taxon>Bacillati</taxon>
        <taxon>Bacillota</taxon>
        <taxon>Bacilli</taxon>
        <taxon>Bacillales</taxon>
        <taxon>Staphylococcaceae</taxon>
        <taxon>Staphylococcus</taxon>
    </lineage>
</organism>
<evidence type="ECO:0000250" key="1"/>
<evidence type="ECO:0000250" key="2">
    <source>
        <dbReference type="UniProtKB" id="A0A0H2URK1"/>
    </source>
</evidence>
<evidence type="ECO:0000250" key="3">
    <source>
        <dbReference type="UniProtKB" id="Q2FUW1"/>
    </source>
</evidence>
<evidence type="ECO:0000255" key="4">
    <source>
        <dbReference type="PROSITE-ProRule" id="PRU00477"/>
    </source>
</evidence>
<evidence type="ECO:0000256" key="5">
    <source>
        <dbReference type="SAM" id="MobiDB-lite"/>
    </source>
</evidence>
<evidence type="ECO:0000305" key="6"/>
<gene>
    <name type="primary">sraP</name>
    <name type="synonym">sasA</name>
    <name type="ordered locus">SA2447</name>
</gene>
<protein>
    <recommendedName>
        <fullName>Serine-rich adhesin for platelets</fullName>
    </recommendedName>
    <alternativeName>
        <fullName evidence="6">Adhesin SraP</fullName>
    </alternativeName>
    <alternativeName>
        <fullName>Staphylococcus aureus surface protein A</fullName>
    </alternativeName>
</protein>
<proteinExistence type="evidence at protein level"/>
<comment type="function">
    <text evidence="1 3">Mediates binding to human platelets, possibly through a receptor-ligand interaction. Probably associated with virulence in endovascular infection (By similarity).</text>
</comment>
<comment type="subcellular location">
    <subcellularLocation>
        <location evidence="4">Secreted</location>
        <location evidence="4">Cell wall</location>
        <topology evidence="4">Peptidoglycan-anchor</topology>
    </subcellularLocation>
    <text evidence="3">Exported by the accessory SecA2/SecY2 system. Anchored to the cell wall by sortase A (By similarity).</text>
</comment>
<comment type="PTM">
    <text evidence="1 3">Proteolytically cleaved by a metalloprotease.</text>
</comment>
<comment type="PTM">
    <text evidence="2 3">Glycosylated (By similarity). It is probable that most of the Ser residues in SSR1 and SSR2 are O-GlcNAcylated. Sequential glycosylation by sugar transferases are able to generate complex sugar polymorphisms (By similarity).</text>
</comment>
<comment type="similarity">
    <text evidence="6">Belongs to the serine-rich repeat protein (SRRP) family.</text>
</comment>
<keyword id="KW-0130">Cell adhesion</keyword>
<keyword id="KW-0134">Cell wall</keyword>
<keyword id="KW-0325">Glycoprotein</keyword>
<keyword id="KW-0572">Peptidoglycan-anchor</keyword>
<keyword id="KW-0964">Secreted</keyword>
<keyword id="KW-0732">Signal</keyword>
<keyword id="KW-0843">Virulence</keyword>